<gene>
    <name evidence="16" type="primary">Scn5a</name>
</gene>
<proteinExistence type="evidence at protein level"/>
<name>SCN5A_MOUSE</name>
<comment type="function">
    <text evidence="3 7 10 11">Pore-forming subunit of Nav1.5, a voltage-gated sodium (Nav) channel that directly mediates the depolarizing phase of action potentials in excitable membranes. Navs, also called VGSCs (voltage-gated sodium channels) or VDSCs (voltage-dependent sodium channels), operate by switching between closed and open conformations depending on the voltage difference across the membrane. In the open conformation they allow Na(+) ions to selectively pass through the pore, along their electrochemical gradient. The influx of Na(+) ions provokes membrane depolarization, initiating the propagation of electrical signals throughout cells and tissues (PubMed:11834499, PubMed:23420830). Nav1.5 is the predominant sodium channel expressed in myocardial cells and it is responsible for the initial upstroke of the action potential in cardiac myocytes, thereby initiating the heartbeat (PubMed:11834499, PubMed:23420830, PubMed:29306897). Required for normal electrical conduction including formation of the infranodal ventricular conduction system and normal action potential configuration, as a result of its interaction with XIRP2 (PubMed:29306897).</text>
</comment>
<comment type="catalytic activity">
    <reaction evidence="7">
        <text>Na(+)(in) = Na(+)(out)</text>
        <dbReference type="Rhea" id="RHEA:34963"/>
        <dbReference type="ChEBI" id="CHEBI:29101"/>
    </reaction>
</comment>
<comment type="activity regulation">
    <text evidence="3">Channel inactivation is regulated by intracellular calcium levels. It is a tetrodotoxin-resistant voltage-gated Na(+) channel (Nav).</text>
</comment>
<comment type="subunit">
    <text evidence="2 3 9 11 12">Cannot form the same regulatory interactions with beta subunits as other Navs do (By similarity). Interacts with the PDZ domain of the syntrophin SNTA1, SNTB1 and SNTB2 (PubMed:9412493). Interacts with NEDD4, NEDD4L, WWP2 and GPD1L (By similarity). Interacts with CALM (By similarity). Interacts with FGF13; the interaction is direct and may regulate SNC5A density at membranes and function (PubMed:21817159). Interacts with FGF12 and FGF14 (By similarity). Interacts with ANK3 (By similarity). Interacts with PKP2 (via N-terminus) (By similarity). Interacts with TMEM233 (By similarity). Interacts with XIRP2; the interaction is required for normal action potential configuration in the heart (PubMed:29306897).</text>
</comment>
<comment type="interaction">
    <interactant intactId="EBI-8313814">
        <id>Q9JJV9</id>
    </interactant>
    <interactant intactId="EBI-10768169">
        <id>Q4U4S6</id>
        <label>Xirp2</label>
    </interactant>
    <organismsDiffer>false</organismsDiffer>
    <experiments>2</experiments>
</comment>
<comment type="subcellular location">
    <subcellularLocation>
        <location evidence="7 10">Cell membrane</location>
        <topology evidence="2">Multi-pass membrane protein</topology>
    </subcellularLocation>
    <subcellularLocation>
        <location evidence="3">Cytoplasm</location>
        <location evidence="3">Perinuclear region</location>
    </subcellularLocation>
    <subcellularLocation>
        <location evidence="2">Cell membrane</location>
        <location evidence="2">Sarcolemma</location>
        <location evidence="2">T-tubule</location>
    </subcellularLocation>
    <subcellularLocation>
        <location evidence="2">Cell junction</location>
    </subcellularLocation>
    <text evidence="2 10">RANGRF promotes trafficking to the cell membrane. Colocalizes with PKP2 at intercalated disks in the heart (By similarity).</text>
</comment>
<comment type="alternative products">
    <event type="alternative splicing"/>
    <isoform>
        <id>Q9JJV9-1</id>
        <name>1</name>
        <sequence type="displayed"/>
    </isoform>
    <isoform>
        <id>Q9JJV9-2</id>
        <name>2</name>
        <sequence type="described" ref="VSP_037444"/>
    </isoform>
    <text>Additional isoforms seem to exist.</text>
</comment>
<comment type="tissue specificity">
    <text evidence="7 11">Expressed in the myocardium (at protein level).</text>
</comment>
<comment type="domain">
    <text evidence="15">The sequence contains 4 internal repeats, each with 5 hydrophobic segments (S1, S2, S3, S5, S6) and one positively charged segment (S4). Segments S4 are probably the voltage-sensors and are characterized by a series of positively charged amino acids at every third position.</text>
</comment>
<comment type="domain">
    <text evidence="3">The IQ domain mediates association with calmodulin.</text>
</comment>
<comment type="PTM">
    <text evidence="3 8">Phosphorylation at Ser-1505 by PKC in a highly conserved cytoplasmic loop slows inactivation of the sodium channel and reduces peak sodium currents (By similarity). Regulated through phosphorylation by CaMK2D (PubMed:17124532).</text>
</comment>
<comment type="PTM">
    <text evidence="3">Ubiquitinated by NEDD4L; which promotes its endocytosis. Does not seem to be ubiquitinated by NEDD4 or WWP2.</text>
</comment>
<comment type="PTM">
    <text evidence="2">Lacks the cysteine which covalently binds the conotoxin GVIIJ. This cysteine (position 868) is speculated in other sodium channel subunits alpha to be implied in covalent binding with the sodium channel subunit beta-2 or beta-4.</text>
</comment>
<comment type="PTM">
    <text evidence="2">N-glycosylated at Asn-318, probably hinders potential interaction with regulatory subunits.</text>
</comment>
<comment type="similarity">
    <text evidence="15">Belongs to the sodium channel (TC 1.A.1.10) family. Nav1.5/SCN5A subfamily.</text>
</comment>
<dbReference type="EMBL" id="AJ271477">
    <property type="protein sequence ID" value="CAB70096.1"/>
    <property type="molecule type" value="mRNA"/>
</dbReference>
<dbReference type="EMBL" id="AK147254">
    <property type="protein sequence ID" value="BAE27800.1"/>
    <property type="molecule type" value="mRNA"/>
</dbReference>
<dbReference type="EMBL" id="AK147517">
    <property type="protein sequence ID" value="BAE27966.1"/>
    <property type="molecule type" value="mRNA"/>
</dbReference>
<dbReference type="EMBL" id="AC121922">
    <property type="status" value="NOT_ANNOTATED_CDS"/>
    <property type="molecule type" value="Genomic_DNA"/>
</dbReference>
<dbReference type="EMBL" id="AC171201">
    <property type="status" value="NOT_ANNOTATED_CDS"/>
    <property type="molecule type" value="Genomic_DNA"/>
</dbReference>
<dbReference type="RefSeq" id="NP_001240789.1">
    <property type="nucleotide sequence ID" value="NM_001253860.1"/>
</dbReference>
<dbReference type="RefSeq" id="NP_067519.2">
    <property type="nucleotide sequence ID" value="NM_021544.4"/>
</dbReference>
<dbReference type="BMRB" id="Q9JJV9"/>
<dbReference type="SMR" id="Q9JJV9"/>
<dbReference type="BioGRID" id="203101">
    <property type="interactions" value="14"/>
</dbReference>
<dbReference type="DIP" id="DIP-46142N"/>
<dbReference type="FunCoup" id="Q9JJV9">
    <property type="interactions" value="163"/>
</dbReference>
<dbReference type="IntAct" id="Q9JJV9">
    <property type="interactions" value="4"/>
</dbReference>
<dbReference type="MINT" id="Q9JJV9"/>
<dbReference type="STRING" id="10090.ENSMUSP00000112838"/>
<dbReference type="BindingDB" id="Q9JJV9"/>
<dbReference type="ChEMBL" id="CHEMBL4630764"/>
<dbReference type="GlyCosmos" id="Q9JJV9">
    <property type="glycosylation" value="13 sites, No reported glycans"/>
</dbReference>
<dbReference type="GlyGen" id="Q9JJV9">
    <property type="glycosylation" value="15 sites, 6 N-linked glycans (5 sites)"/>
</dbReference>
<dbReference type="iPTMnet" id="Q9JJV9"/>
<dbReference type="PhosphoSitePlus" id="Q9JJV9"/>
<dbReference type="CPTAC" id="non-CPTAC-4004"/>
<dbReference type="jPOST" id="Q9JJV9"/>
<dbReference type="PaxDb" id="10090-ENSMUSP00000112838"/>
<dbReference type="ProteomicsDB" id="253414">
    <molecule id="Q9JJV9-1"/>
</dbReference>
<dbReference type="ProteomicsDB" id="253415">
    <molecule id="Q9JJV9-2"/>
</dbReference>
<dbReference type="ABCD" id="Q9JJV9">
    <property type="antibodies" value="2 sequenced antibodies"/>
</dbReference>
<dbReference type="Antibodypedia" id="6411">
    <property type="antibodies" value="321 antibodies from 33 providers"/>
</dbReference>
<dbReference type="DNASU" id="20271"/>
<dbReference type="Ensembl" id="ENSMUST00000120420.2">
    <molecule id="Q9JJV9-1"/>
    <property type="protein sequence ID" value="ENSMUSP00000113272.2"/>
    <property type="gene ID" value="ENSMUSG00000032511.18"/>
</dbReference>
<dbReference type="GeneID" id="20271"/>
<dbReference type="KEGG" id="mmu:20271"/>
<dbReference type="UCSC" id="uc009sbc.2">
    <molecule id="Q9JJV9-2"/>
    <property type="organism name" value="mouse"/>
</dbReference>
<dbReference type="AGR" id="MGI:98251"/>
<dbReference type="CTD" id="6331"/>
<dbReference type="MGI" id="MGI:98251">
    <property type="gene designation" value="Scn5a"/>
</dbReference>
<dbReference type="VEuPathDB" id="HostDB:ENSMUSG00000032511"/>
<dbReference type="eggNOG" id="KOG2301">
    <property type="taxonomic scope" value="Eukaryota"/>
</dbReference>
<dbReference type="GeneTree" id="ENSGT00940000161691"/>
<dbReference type="InParanoid" id="Q9JJV9"/>
<dbReference type="OrthoDB" id="2984333at2759"/>
<dbReference type="TreeFam" id="TF323985"/>
<dbReference type="BioGRID-ORCS" id="20271">
    <property type="hits" value="2 hits in 78 CRISPR screens"/>
</dbReference>
<dbReference type="PRO" id="PR:Q9JJV9"/>
<dbReference type="Proteomes" id="UP000000589">
    <property type="component" value="Chromosome 9"/>
</dbReference>
<dbReference type="RNAct" id="Q9JJV9">
    <property type="molecule type" value="protein"/>
</dbReference>
<dbReference type="Bgee" id="ENSMUSG00000032511">
    <property type="expression patterns" value="Expressed in myocardium of ventricle and 114 other cell types or tissues"/>
</dbReference>
<dbReference type="ExpressionAtlas" id="Q9JJV9">
    <property type="expression patterns" value="baseline and differential"/>
</dbReference>
<dbReference type="GO" id="GO:0009986">
    <property type="term" value="C:cell surface"/>
    <property type="evidence" value="ECO:0000314"/>
    <property type="project" value="BHF-UCL"/>
</dbReference>
<dbReference type="GO" id="GO:0014704">
    <property type="term" value="C:intercalated disc"/>
    <property type="evidence" value="ECO:0000314"/>
    <property type="project" value="BHF-UCL"/>
</dbReference>
<dbReference type="GO" id="GO:0016328">
    <property type="term" value="C:lateral plasma membrane"/>
    <property type="evidence" value="ECO:0000314"/>
    <property type="project" value="BHF-UCL"/>
</dbReference>
<dbReference type="GO" id="GO:0016020">
    <property type="term" value="C:membrane"/>
    <property type="evidence" value="ECO:0000250"/>
    <property type="project" value="UniProtKB"/>
</dbReference>
<dbReference type="GO" id="GO:0048471">
    <property type="term" value="C:perinuclear region of cytoplasm"/>
    <property type="evidence" value="ECO:0007669"/>
    <property type="project" value="UniProtKB-SubCell"/>
</dbReference>
<dbReference type="GO" id="GO:0005886">
    <property type="term" value="C:plasma membrane"/>
    <property type="evidence" value="ECO:0000314"/>
    <property type="project" value="MGI"/>
</dbReference>
<dbReference type="GO" id="GO:0034706">
    <property type="term" value="C:sodium channel complex"/>
    <property type="evidence" value="ECO:0000353"/>
    <property type="project" value="MGI"/>
</dbReference>
<dbReference type="GO" id="GO:0030315">
    <property type="term" value="C:T-tubule"/>
    <property type="evidence" value="ECO:0000314"/>
    <property type="project" value="MGI"/>
</dbReference>
<dbReference type="GO" id="GO:0001518">
    <property type="term" value="C:voltage-gated sodium channel complex"/>
    <property type="evidence" value="ECO:0000305"/>
    <property type="project" value="MGI"/>
</dbReference>
<dbReference type="GO" id="GO:0005516">
    <property type="term" value="F:calmodulin binding"/>
    <property type="evidence" value="ECO:0007669"/>
    <property type="project" value="UniProtKB-KW"/>
</dbReference>
<dbReference type="GO" id="GO:0097110">
    <property type="term" value="F:scaffold protein binding"/>
    <property type="evidence" value="ECO:0000353"/>
    <property type="project" value="BHF-UCL"/>
</dbReference>
<dbReference type="GO" id="GO:0031625">
    <property type="term" value="F:ubiquitin protein ligase binding"/>
    <property type="evidence" value="ECO:0000353"/>
    <property type="project" value="MGI"/>
</dbReference>
<dbReference type="GO" id="GO:0005248">
    <property type="term" value="F:voltage-gated sodium channel activity"/>
    <property type="evidence" value="ECO:0000314"/>
    <property type="project" value="MGI"/>
</dbReference>
<dbReference type="GO" id="GO:0086006">
    <property type="term" value="F:voltage-gated sodium channel activity involved in cardiac muscle cell action potential"/>
    <property type="evidence" value="ECO:0000314"/>
    <property type="project" value="MGI"/>
</dbReference>
<dbReference type="GO" id="GO:0086063">
    <property type="term" value="F:voltage-gated sodium channel activity involved in SA node cell action potential"/>
    <property type="evidence" value="ECO:0000315"/>
    <property type="project" value="MGI"/>
</dbReference>
<dbReference type="GO" id="GO:0055074">
    <property type="term" value="P:calcium ion homeostasis"/>
    <property type="evidence" value="ECO:0000314"/>
    <property type="project" value="MGI"/>
</dbReference>
<dbReference type="GO" id="GO:0086002">
    <property type="term" value="P:cardiac muscle cell action potential involved in contraction"/>
    <property type="evidence" value="ECO:0000315"/>
    <property type="project" value="MGI"/>
</dbReference>
<dbReference type="GO" id="GO:0003231">
    <property type="term" value="P:cardiac ventricle development"/>
    <property type="evidence" value="ECO:0000315"/>
    <property type="project" value="MGI"/>
</dbReference>
<dbReference type="GO" id="GO:0086065">
    <property type="term" value="P:cell communication involved in cardiac conduction"/>
    <property type="evidence" value="ECO:0000315"/>
    <property type="project" value="MGI"/>
</dbReference>
<dbReference type="GO" id="GO:0071277">
    <property type="term" value="P:cellular response to calcium ion"/>
    <property type="evidence" value="ECO:0000250"/>
    <property type="project" value="UniProtKB"/>
</dbReference>
<dbReference type="GO" id="GO:0051649">
    <property type="term" value="P:establishment of localization in cell"/>
    <property type="evidence" value="ECO:0000315"/>
    <property type="project" value="MGI"/>
</dbReference>
<dbReference type="GO" id="GO:0046716">
    <property type="term" value="P:muscle cell cellular homeostasis"/>
    <property type="evidence" value="ECO:0000314"/>
    <property type="project" value="MGI"/>
</dbReference>
<dbReference type="GO" id="GO:0086004">
    <property type="term" value="P:regulation of cardiac muscle cell contraction"/>
    <property type="evidence" value="ECO:0000315"/>
    <property type="project" value="MGI"/>
</dbReference>
<dbReference type="GO" id="GO:0086091">
    <property type="term" value="P:regulation of heart rate by cardiac conduction"/>
    <property type="evidence" value="ECO:0000315"/>
    <property type="project" value="MGI"/>
</dbReference>
<dbReference type="GO" id="GO:0098719">
    <property type="term" value="P:sodium ion import across plasma membrane"/>
    <property type="evidence" value="ECO:0000315"/>
    <property type="project" value="MGI"/>
</dbReference>
<dbReference type="GO" id="GO:0035725">
    <property type="term" value="P:sodium ion transmembrane transport"/>
    <property type="evidence" value="ECO:0000314"/>
    <property type="project" value="MGI"/>
</dbReference>
<dbReference type="GO" id="GO:0006814">
    <property type="term" value="P:sodium ion transport"/>
    <property type="evidence" value="ECO:0000314"/>
    <property type="project" value="MGI"/>
</dbReference>
<dbReference type="CDD" id="cd13433">
    <property type="entry name" value="Na_channel_gate"/>
    <property type="match status" value="1"/>
</dbReference>
<dbReference type="FunFam" id="1.10.238.10:FF:000002">
    <property type="entry name" value="Sodium channel protein"/>
    <property type="match status" value="1"/>
</dbReference>
<dbReference type="FunFam" id="1.10.287.70:FF:000001">
    <property type="entry name" value="Sodium channel protein"/>
    <property type="match status" value="1"/>
</dbReference>
<dbReference type="FunFam" id="1.10.287.70:FF:000006">
    <property type="entry name" value="Sodium channel protein"/>
    <property type="match status" value="1"/>
</dbReference>
<dbReference type="FunFam" id="1.20.120.350:FF:000002">
    <property type="entry name" value="Sodium channel protein"/>
    <property type="match status" value="1"/>
</dbReference>
<dbReference type="FunFam" id="1.20.120.350:FF:000004">
    <property type="entry name" value="Sodium channel protein"/>
    <property type="match status" value="1"/>
</dbReference>
<dbReference type="FunFam" id="1.20.120.350:FF:000005">
    <property type="entry name" value="Sodium channel protein"/>
    <property type="match status" value="1"/>
</dbReference>
<dbReference type="FunFam" id="1.20.5.1190:FF:000001">
    <property type="entry name" value="Sodium channel protein"/>
    <property type="match status" value="1"/>
</dbReference>
<dbReference type="FunFam" id="1.10.287.70:FF:000562">
    <property type="entry name" value="Uncharacterized protein"/>
    <property type="match status" value="1"/>
</dbReference>
<dbReference type="FunFam" id="1.20.120.350:FF:000003">
    <property type="entry name" value="Voltage-dependent sodium channel"/>
    <property type="match status" value="1"/>
</dbReference>
<dbReference type="Gene3D" id="1.10.287.70">
    <property type="match status" value="4"/>
</dbReference>
<dbReference type="Gene3D" id="1.10.238.10">
    <property type="entry name" value="EF-hand"/>
    <property type="match status" value="1"/>
</dbReference>
<dbReference type="Gene3D" id="1.20.5.1190">
    <property type="entry name" value="iswi atpase"/>
    <property type="match status" value="1"/>
</dbReference>
<dbReference type="Gene3D" id="1.20.120.350">
    <property type="entry name" value="Voltage-gated potassium channels. Chain C"/>
    <property type="match status" value="4"/>
</dbReference>
<dbReference type="InterPro" id="IPR005821">
    <property type="entry name" value="Ion_trans_dom"/>
</dbReference>
<dbReference type="InterPro" id="IPR008053">
    <property type="entry name" value="Na_channel_a5su"/>
</dbReference>
<dbReference type="InterPro" id="IPR001696">
    <property type="entry name" value="Na_channel_asu"/>
</dbReference>
<dbReference type="InterPro" id="IPR044564">
    <property type="entry name" value="Na_chnl_inactivation_gate"/>
</dbReference>
<dbReference type="InterPro" id="IPR010526">
    <property type="entry name" value="Na_trans_assoc_dom"/>
</dbReference>
<dbReference type="InterPro" id="IPR024583">
    <property type="entry name" value="Na_trans_cytopl"/>
</dbReference>
<dbReference type="InterPro" id="IPR043203">
    <property type="entry name" value="VGCC_Ca_Na"/>
</dbReference>
<dbReference type="InterPro" id="IPR027359">
    <property type="entry name" value="Volt_channel_dom_sf"/>
</dbReference>
<dbReference type="PANTHER" id="PTHR10037:SF206">
    <property type="entry name" value="SODIUM CHANNEL PROTEIN TYPE 5 SUBUNIT ALPHA"/>
    <property type="match status" value="1"/>
</dbReference>
<dbReference type="PANTHER" id="PTHR10037">
    <property type="entry name" value="VOLTAGE-GATED CATION CHANNEL CALCIUM AND SODIUM"/>
    <property type="match status" value="1"/>
</dbReference>
<dbReference type="Pfam" id="PF00520">
    <property type="entry name" value="Ion_trans"/>
    <property type="match status" value="4"/>
</dbReference>
<dbReference type="Pfam" id="PF24609">
    <property type="entry name" value="IQ_SCN5A_C"/>
    <property type="match status" value="1"/>
</dbReference>
<dbReference type="Pfam" id="PF06512">
    <property type="entry name" value="Na_trans_assoc"/>
    <property type="match status" value="1"/>
</dbReference>
<dbReference type="Pfam" id="PF11933">
    <property type="entry name" value="Na_trans_cytopl"/>
    <property type="match status" value="1"/>
</dbReference>
<dbReference type="PRINTS" id="PR00170">
    <property type="entry name" value="NACHANNEL"/>
</dbReference>
<dbReference type="PRINTS" id="PR01666">
    <property type="entry name" value="NACHANNEL5"/>
</dbReference>
<dbReference type="SUPFAM" id="SSF81324">
    <property type="entry name" value="Voltage-gated potassium channels"/>
    <property type="match status" value="4"/>
</dbReference>
<evidence type="ECO:0000250" key="1">
    <source>
        <dbReference type="UniProtKB" id="D0E0C2"/>
    </source>
</evidence>
<evidence type="ECO:0000250" key="2">
    <source>
        <dbReference type="UniProtKB" id="P15389"/>
    </source>
</evidence>
<evidence type="ECO:0000250" key="3">
    <source>
        <dbReference type="UniProtKB" id="Q14524"/>
    </source>
</evidence>
<evidence type="ECO:0000255" key="4"/>
<evidence type="ECO:0000255" key="5">
    <source>
        <dbReference type="PROSITE-ProRule" id="PRU00116"/>
    </source>
</evidence>
<evidence type="ECO:0000256" key="6">
    <source>
        <dbReference type="SAM" id="MobiDB-lite"/>
    </source>
</evidence>
<evidence type="ECO:0000269" key="7">
    <source>
    </source>
</evidence>
<evidence type="ECO:0000269" key="8">
    <source>
    </source>
</evidence>
<evidence type="ECO:0000269" key="9">
    <source>
    </source>
</evidence>
<evidence type="ECO:0000269" key="10">
    <source>
    </source>
</evidence>
<evidence type="ECO:0000269" key="11">
    <source>
    </source>
</evidence>
<evidence type="ECO:0000269" key="12">
    <source>
    </source>
</evidence>
<evidence type="ECO:0000303" key="13">
    <source>
    </source>
</evidence>
<evidence type="ECO:0000303" key="14">
    <source>
    </source>
</evidence>
<evidence type="ECO:0000305" key="15"/>
<evidence type="ECO:0000312" key="16">
    <source>
        <dbReference type="MGI" id="MGI:98251"/>
    </source>
</evidence>
<evidence type="ECO:0007744" key="17">
    <source>
    </source>
</evidence>
<evidence type="ECO:0007744" key="18">
    <source>
    </source>
</evidence>
<accession>Q9JJV9</accession>
<accession>E9Q1D2</accession>
<accession>Q3UH91</accession>
<keyword id="KW-0025">Alternative splicing</keyword>
<keyword id="KW-0112">Calmodulin-binding</keyword>
<keyword id="KW-0965">Cell junction</keyword>
<keyword id="KW-1003">Cell membrane</keyword>
<keyword id="KW-0963">Cytoplasm</keyword>
<keyword id="KW-1015">Disulfide bond</keyword>
<keyword id="KW-0325">Glycoprotein</keyword>
<keyword id="KW-0407">Ion channel</keyword>
<keyword id="KW-0406">Ion transport</keyword>
<keyword id="KW-0472">Membrane</keyword>
<keyword id="KW-0488">Methylation</keyword>
<keyword id="KW-0597">Phosphoprotein</keyword>
<keyword id="KW-1185">Reference proteome</keyword>
<keyword id="KW-0677">Repeat</keyword>
<keyword id="KW-0915">Sodium</keyword>
<keyword id="KW-0894">Sodium channel</keyword>
<keyword id="KW-0739">Sodium transport</keyword>
<keyword id="KW-0812">Transmembrane</keyword>
<keyword id="KW-1133">Transmembrane helix</keyword>
<keyword id="KW-0813">Transport</keyword>
<keyword id="KW-0832">Ubl conjugation</keyword>
<keyword id="KW-0851">Voltage-gated channel</keyword>
<organism>
    <name type="scientific">Mus musculus</name>
    <name type="common">Mouse</name>
    <dbReference type="NCBI Taxonomy" id="10090"/>
    <lineage>
        <taxon>Eukaryota</taxon>
        <taxon>Metazoa</taxon>
        <taxon>Chordata</taxon>
        <taxon>Craniata</taxon>
        <taxon>Vertebrata</taxon>
        <taxon>Euteleostomi</taxon>
        <taxon>Mammalia</taxon>
        <taxon>Eutheria</taxon>
        <taxon>Euarchontoglires</taxon>
        <taxon>Glires</taxon>
        <taxon>Rodentia</taxon>
        <taxon>Myomorpha</taxon>
        <taxon>Muroidea</taxon>
        <taxon>Muridae</taxon>
        <taxon>Murinae</taxon>
        <taxon>Mus</taxon>
        <taxon>Mus</taxon>
    </lineage>
</organism>
<feature type="chain" id="PRO_0000376895" description="Sodium channel protein type 5 subunit alpha">
    <location>
        <begin position="1"/>
        <end position="2019"/>
    </location>
</feature>
<feature type="topological domain" description="Cytoplasmic" evidence="15">
    <location>
        <begin position="1"/>
        <end position="129"/>
    </location>
</feature>
<feature type="transmembrane region" description="Helical; Name=S1 of repeat I" evidence="2">
    <location>
        <begin position="130"/>
        <end position="149"/>
    </location>
</feature>
<feature type="topological domain" description="Extracellular" evidence="15">
    <location>
        <begin position="150"/>
        <end position="157"/>
    </location>
</feature>
<feature type="transmembrane region" description="Helical; Name=S2 of repeat I" evidence="2">
    <location>
        <begin position="158"/>
        <end position="179"/>
    </location>
</feature>
<feature type="topological domain" description="Cytoplasmic" evidence="15">
    <location>
        <begin position="180"/>
        <end position="188"/>
    </location>
</feature>
<feature type="transmembrane region" description="Helical; Name=S3 of repeat I" evidence="2">
    <location>
        <begin position="189"/>
        <end position="209"/>
    </location>
</feature>
<feature type="topological domain" description="Extracellular" evidence="15">
    <location>
        <begin position="210"/>
        <end position="216"/>
    </location>
</feature>
<feature type="transmembrane region" description="Helical; Name=S4 of repeat I" evidence="2">
    <location>
        <begin position="217"/>
        <end position="236"/>
    </location>
</feature>
<feature type="topological domain" description="Cytoplasmic" evidence="15">
    <location>
        <begin position="237"/>
        <end position="249"/>
    </location>
</feature>
<feature type="transmembrane region" description="Helical; Name=S5 of repeat I" evidence="2">
    <location>
        <begin position="250"/>
        <end position="272"/>
    </location>
</feature>
<feature type="topological domain" description="Extracellular" evidence="15">
    <location>
        <begin position="273"/>
        <end position="357"/>
    </location>
</feature>
<feature type="intramembrane region" description="Pore-forming" evidence="2">
    <location>
        <begin position="358"/>
        <end position="378"/>
    </location>
</feature>
<feature type="topological domain" description="Extracellular" evidence="15">
    <location>
        <begin position="379"/>
        <end position="386"/>
    </location>
</feature>
<feature type="transmembrane region" description="Helical; Name=S6 of repeat I" evidence="2">
    <location>
        <begin position="387"/>
        <end position="413"/>
    </location>
</feature>
<feature type="topological domain" description="Cytoplasmic" evidence="15">
    <location>
        <begin position="414"/>
        <end position="719"/>
    </location>
</feature>
<feature type="transmembrane region" description="Helical; Name=S1 of repeat II" evidence="2">
    <location>
        <begin position="720"/>
        <end position="737"/>
    </location>
</feature>
<feature type="topological domain" description="Extracellular" evidence="15">
    <location>
        <begin position="738"/>
        <end position="746"/>
    </location>
</feature>
<feature type="transmembrane region" description="Helical; Name=S2 of repeat II" evidence="1">
    <location>
        <begin position="747"/>
        <end position="769"/>
    </location>
</feature>
<feature type="topological domain" description="Cytoplasmic" evidence="15">
    <location>
        <begin position="770"/>
        <end position="775"/>
    </location>
</feature>
<feature type="transmembrane region" description="Helical; Name=S3 of repeat II" evidence="1">
    <location>
        <begin position="776"/>
        <end position="796"/>
    </location>
</feature>
<feature type="topological domain" description="Extracellular" evidence="15">
    <location>
        <begin position="797"/>
        <end position="806"/>
    </location>
</feature>
<feature type="transmembrane region" description="Helical; Name=S4 of repeat II" evidence="2">
    <location>
        <begin position="807"/>
        <end position="821"/>
    </location>
</feature>
<feature type="topological domain" description="Cytoplasmic" evidence="15">
    <location>
        <begin position="822"/>
        <end position="838"/>
    </location>
</feature>
<feature type="transmembrane region" description="Helical; Name=S5 of repeat II" evidence="1">
    <location>
        <begin position="839"/>
        <end position="860"/>
    </location>
</feature>
<feature type="topological domain" description="Extracellular" evidence="15">
    <location>
        <begin position="861"/>
        <end position="886"/>
    </location>
</feature>
<feature type="intramembrane region" description="Pore-forming" evidence="2">
    <location>
        <begin position="887"/>
        <end position="905"/>
    </location>
</feature>
<feature type="topological domain" description="Extracellular" evidence="15">
    <location>
        <begin position="906"/>
        <end position="914"/>
    </location>
</feature>
<feature type="transmembrane region" description="Helical; Name=S6 of repeat II" evidence="1">
    <location>
        <begin position="915"/>
        <end position="943"/>
    </location>
</feature>
<feature type="topological domain" description="Cytoplasmic" evidence="15">
    <location>
        <begin position="944"/>
        <end position="1205"/>
    </location>
</feature>
<feature type="transmembrane region" description="Helical; Name=S1 of repeat III" evidence="1">
    <location>
        <begin position="1206"/>
        <end position="1227"/>
    </location>
</feature>
<feature type="topological domain" description="Extracellular" evidence="15">
    <location>
        <begin position="1228"/>
        <end position="1238"/>
    </location>
</feature>
<feature type="transmembrane region" description="Helical; Name=S2 of repeat III" evidence="1">
    <location>
        <begin position="1239"/>
        <end position="1261"/>
    </location>
</feature>
<feature type="topological domain" description="Cytoplasmic" evidence="15">
    <location>
        <begin position="1262"/>
        <end position="1270"/>
    </location>
</feature>
<feature type="transmembrane region" description="Helical; Name=S3 of repeat III" evidence="1">
    <location>
        <begin position="1271"/>
        <end position="1293"/>
    </location>
</feature>
<feature type="topological domain" description="Extracellular" evidence="15">
    <location>
        <begin position="1294"/>
        <end position="1299"/>
    </location>
</feature>
<feature type="transmembrane region" description="Helical; Name=S4 of repeat III" evidence="1">
    <location>
        <begin position="1300"/>
        <end position="1319"/>
    </location>
</feature>
<feature type="topological domain" description="Cytoplasmic" evidence="15">
    <location>
        <begin position="1320"/>
        <end position="1332"/>
    </location>
</feature>
<feature type="transmembrane region" description="Helical; Name=S5 of repeat III" evidence="1">
    <location>
        <begin position="1333"/>
        <end position="1357"/>
    </location>
</feature>
<feature type="topological domain" description="Extracellular" evidence="15">
    <location>
        <begin position="1358"/>
        <end position="1402"/>
    </location>
</feature>
<feature type="intramembrane region" description="Pore-forming" evidence="2">
    <location>
        <begin position="1403"/>
        <end position="1424"/>
    </location>
</feature>
<feature type="topological domain" description="Extracellular" evidence="15">
    <location>
        <begin position="1425"/>
        <end position="1447"/>
    </location>
</feature>
<feature type="transmembrane region" description="Helical; Name=S6 of repeat III" evidence="1">
    <location>
        <begin position="1448"/>
        <end position="1472"/>
    </location>
</feature>
<feature type="topological domain" description="Cytoplasmic" evidence="15">
    <location>
        <begin position="1473"/>
        <end position="1530"/>
    </location>
</feature>
<feature type="transmembrane region" description="Helical; Name=S1 of repeat IV" evidence="1">
    <location>
        <begin position="1531"/>
        <end position="1549"/>
    </location>
</feature>
<feature type="topological domain" description="Extracellular" evidence="15">
    <location>
        <begin position="1550"/>
        <end position="1560"/>
    </location>
</feature>
<feature type="transmembrane region" description="Helical; Name=S2 of repeat IV" evidence="1">
    <location>
        <begin position="1561"/>
        <end position="1582"/>
    </location>
</feature>
<feature type="topological domain" description="Cytoplasmic" evidence="15">
    <location>
        <begin position="1583"/>
        <end position="1591"/>
    </location>
</feature>
<feature type="transmembrane region" description="Helical; Name=S3 of repeat IV" evidence="1">
    <location>
        <begin position="1592"/>
        <end position="1614"/>
    </location>
</feature>
<feature type="topological domain" description="Extracellular" evidence="15">
    <location>
        <begin position="1615"/>
        <end position="1621"/>
    </location>
</feature>
<feature type="transmembrane region" description="Helical; Name=S4 of repeat IV" evidence="2">
    <location>
        <begin position="1622"/>
        <end position="1642"/>
    </location>
</feature>
<feature type="topological domain" description="Cytoplasmic" evidence="15">
    <location>
        <begin position="1643"/>
        <end position="1652"/>
    </location>
</feature>
<feature type="transmembrane region" description="Helical; Name=S5 of repeat IV" evidence="2">
    <location>
        <begin position="1653"/>
        <end position="1681"/>
    </location>
</feature>
<feature type="topological domain" description="Extracellular" evidence="15">
    <location>
        <begin position="1682"/>
        <end position="1699"/>
    </location>
</feature>
<feature type="intramembrane region" description="Pore-forming" evidence="2">
    <location>
        <begin position="1700"/>
        <end position="1716"/>
    </location>
</feature>
<feature type="topological domain" description="Extracellular" evidence="15">
    <location>
        <begin position="1717"/>
        <end position="1747"/>
    </location>
</feature>
<feature type="transmembrane region" description="Helical; Name=S6 of repeat IV" evidence="2">
    <location>
        <begin position="1748"/>
        <end position="1773"/>
    </location>
</feature>
<feature type="topological domain" description="Cytoplasmic" evidence="15">
    <location>
        <begin position="1774"/>
        <end position="2019"/>
    </location>
</feature>
<feature type="repeat" description="I" evidence="15">
    <location>
        <begin position="113"/>
        <end position="420"/>
    </location>
</feature>
<feature type="repeat" description="II" evidence="15">
    <location>
        <begin position="699"/>
        <end position="971"/>
    </location>
</feature>
<feature type="repeat" description="III" evidence="15">
    <location>
        <begin position="1189"/>
        <end position="1503"/>
    </location>
</feature>
<feature type="repeat" description="IV" evidence="15">
    <location>
        <begin position="1512"/>
        <end position="1809"/>
    </location>
</feature>
<feature type="domain" description="IQ" evidence="5">
    <location>
        <begin position="1903"/>
        <end position="1932"/>
    </location>
</feature>
<feature type="region of interest" description="Disordered" evidence="6">
    <location>
        <begin position="27"/>
        <end position="66"/>
    </location>
</feature>
<feature type="region of interest" description="Disordered" evidence="6">
    <location>
        <begin position="461"/>
        <end position="575"/>
    </location>
</feature>
<feature type="region of interest" description="Disordered" evidence="6">
    <location>
        <begin position="610"/>
        <end position="647"/>
    </location>
</feature>
<feature type="region of interest" description="Disordered" evidence="6">
    <location>
        <begin position="1000"/>
        <end position="1144"/>
    </location>
</feature>
<feature type="region of interest" description="Interaction with FGF13" evidence="3">
    <location>
        <begin position="1841"/>
        <end position="1903"/>
    </location>
</feature>
<feature type="region of interest" description="Disordered" evidence="6">
    <location>
        <begin position="1963"/>
        <end position="2019"/>
    </location>
</feature>
<feature type="region of interest" description="Interaction with NEDD4, NEDD4L and WWP2" evidence="3">
    <location>
        <begin position="1977"/>
        <end position="1980"/>
    </location>
</feature>
<feature type="compositionally biased region" description="Basic and acidic residues" evidence="6">
    <location>
        <begin position="41"/>
        <end position="52"/>
    </location>
</feature>
<feature type="compositionally biased region" description="Basic and acidic residues" evidence="6">
    <location>
        <begin position="491"/>
        <end position="503"/>
    </location>
</feature>
<feature type="compositionally biased region" description="Polar residues" evidence="6">
    <location>
        <begin position="507"/>
        <end position="528"/>
    </location>
</feature>
<feature type="compositionally biased region" description="Basic and acidic residues" evidence="6">
    <location>
        <begin position="1017"/>
        <end position="1036"/>
    </location>
</feature>
<feature type="compositionally biased region" description="Acidic residues" evidence="6">
    <location>
        <begin position="1056"/>
        <end position="1075"/>
    </location>
</feature>
<feature type="compositionally biased region" description="Low complexity" evidence="6">
    <location>
        <begin position="1098"/>
        <end position="1115"/>
    </location>
</feature>
<feature type="compositionally biased region" description="Low complexity" evidence="6">
    <location>
        <begin position="1963"/>
        <end position="1982"/>
    </location>
</feature>
<feature type="modified residue" description="Phosphoserine" evidence="3">
    <location>
        <position position="36"/>
    </location>
</feature>
<feature type="modified residue" description="Phosphothreonine" evidence="3">
    <location>
        <position position="38"/>
    </location>
</feature>
<feature type="modified residue" description="Phosphoserine" evidence="17">
    <location>
        <position position="457"/>
    </location>
</feature>
<feature type="modified residue" description="Phosphoserine" evidence="3">
    <location>
        <position position="460"/>
    </location>
</feature>
<feature type="modified residue" description="Phosphoserine" evidence="3">
    <location>
        <position position="483"/>
    </location>
</feature>
<feature type="modified residue" description="Phosphoserine" evidence="17">
    <location>
        <position position="484"/>
    </location>
</feature>
<feature type="modified residue" description="Phosphothreonine" evidence="2">
    <location>
        <position position="486"/>
    </location>
</feature>
<feature type="modified residue" description="Phosphoserine" evidence="3">
    <location>
        <position position="497"/>
    </location>
</feature>
<feature type="modified residue" description="Phosphoserine" evidence="3">
    <location>
        <position position="510"/>
    </location>
</feature>
<feature type="modified residue" description="Dimethylated arginine; alternate" evidence="3">
    <location>
        <position position="526"/>
    </location>
</feature>
<feature type="modified residue" description="Omega-N-methylarginine; alternate" evidence="18">
    <location>
        <position position="526"/>
    </location>
</feature>
<feature type="modified residue" description="Phosphoserine" evidence="17">
    <location>
        <position position="539"/>
    </location>
</feature>
<feature type="modified residue" description="Phosphoserine" evidence="3">
    <location>
        <position position="571"/>
    </location>
</feature>
<feature type="modified residue" description="Phosphoserine" evidence="3">
    <location>
        <position position="664"/>
    </location>
</feature>
<feature type="modified residue" description="Phosphoserine" evidence="3">
    <location>
        <position position="667"/>
    </location>
</feature>
<feature type="modified residue" description="Phosphoserine; by PKC" evidence="3">
    <location>
        <position position="1505"/>
    </location>
</feature>
<feature type="glycosylation site" description="N-linked (GlcNAc...) asparagine" evidence="4">
    <location>
        <position position="214"/>
    </location>
</feature>
<feature type="glycosylation site" description="N-linked (GlcNAc...) asparagine" evidence="4">
    <location>
        <position position="283"/>
    </location>
</feature>
<feature type="glycosylation site" description="N-linked (GlcNAc...) asparagine" evidence="4">
    <location>
        <position position="288"/>
    </location>
</feature>
<feature type="glycosylation site" description="N-linked (GlcNAc...) asparagine" evidence="4">
    <location>
        <position position="291"/>
    </location>
</feature>
<feature type="glycosylation site" description="N-linked (GlcNAc...) asparagine" evidence="2">
    <location>
        <position position="318"/>
    </location>
</feature>
<feature type="glycosylation site" description="N-linked (GlcNAc...) asparagine" evidence="4">
    <location>
        <position position="328"/>
    </location>
</feature>
<feature type="glycosylation site" description="N-linked (GlcNAc...) asparagine" evidence="4">
    <location>
        <position position="740"/>
    </location>
</feature>
<feature type="glycosylation site" description="N-linked (GlcNAc...) asparagine" evidence="4">
    <location>
        <position position="803"/>
    </location>
</feature>
<feature type="glycosylation site" description="N-linked (GlcNAc...) asparagine" evidence="4">
    <location>
        <position position="864"/>
    </location>
</feature>
<feature type="glycosylation site" description="N-linked (GlcNAc...) asparagine" evidence="4">
    <location>
        <position position="1367"/>
    </location>
</feature>
<feature type="glycosylation site" description="N-linked (GlcNAc...) asparagine" evidence="4">
    <location>
        <position position="1376"/>
    </location>
</feature>
<feature type="glycosylation site" description="N-linked (GlcNAc...) asparagine" evidence="4">
    <location>
        <position position="1382"/>
    </location>
</feature>
<feature type="glycosylation site" description="N-linked (GlcNAc...) asparagine" evidence="4">
    <location>
        <position position="1390"/>
    </location>
</feature>
<feature type="disulfide bond" evidence="1">
    <location>
        <begin position="280"/>
        <end position="335"/>
    </location>
</feature>
<feature type="disulfide bond" evidence="1">
    <location>
        <begin position="908"/>
        <end position="917"/>
    </location>
</feature>
<feature type="splice variant" id="VSP_037444" description="In isoform 2." evidence="14">
    <original>TTEFVD</original>
    <variation>VSENIK</variation>
    <location>
        <begin position="206"/>
        <end position="211"/>
    </location>
</feature>
<feature type="sequence conflict" description="In Ref. 2; BAE27966/BAE27800." evidence="15" ref="2">
    <original>V</original>
    <variation>L</variation>
    <location>
        <position position="215"/>
    </location>
</feature>
<feature type="sequence conflict" description="In Ref. 2; BAE27966/BAE27800." evidence="15" ref="2">
    <original>S</original>
    <variation>P</variation>
    <location>
        <position position="234"/>
    </location>
</feature>
<feature type="sequence conflict" description="In Ref. 1; CAB70096." evidence="15" ref="1">
    <original>AA</original>
    <variation>TT</variation>
    <location>
        <begin position="1008"/>
        <end position="1009"/>
    </location>
</feature>
<feature type="sequence conflict" description="In Ref. 2; BAE27966/BAE27800." evidence="15" ref="2">
    <original>K</original>
    <variation>KQ</variation>
    <location>
        <position position="1078"/>
    </location>
</feature>
<feature type="sequence conflict" description="In Ref. 1; CAB70096." evidence="15" ref="1">
    <original>T</original>
    <variation>S</variation>
    <location>
        <position position="1133"/>
    </location>
</feature>
<protein>
    <recommendedName>
        <fullName evidence="15">Sodium channel protein type 5 subunit alpha</fullName>
    </recommendedName>
    <alternativeName>
        <fullName>Sodium channel protein cardiac muscle subunit alpha</fullName>
    </alternativeName>
    <alternativeName>
        <fullName>Sodium channel protein type V subunit alpha</fullName>
    </alternativeName>
    <alternativeName>
        <fullName>Voltage-gated sodium channel subunit alpha Nav1.5</fullName>
    </alternativeName>
    <alternativeName>
        <fullName evidence="13">mH1</fullName>
    </alternativeName>
</protein>
<sequence>MANFLLPRGTSSFRRFTRESLAAIEKRMAEKQARGSATSQESREGLPEEEAPRPQLDLQASKKLPDLYGNPPRELIGEPLEDLDPFYSTQKTFIVLNKGKTIFRFSATNALYVLSPFHPVRRAAVKILVHSLFSMLIMCTILTNCVFMAQHDPPPWTKYVEYTFTAIYTFESLVKILARGFCLHAFTFLRDPWNWLDFSVIVMAYTTEFVDLGNVSALRTFRVLRALKTISVISGLKTIVGALIQSVKKLADVMVLTVFCLSVFALIGLQLFMGNLRHKCVRNFTELNGTNGSVEADGIVWNSLDVYLNDPANYLLKNGTTDVLLCGNSSDAGTCPEGYRCLKAGENPDHGYTSFDSFAWAFLALFRLMTQDCWERLYQQTLRSAGKIYMIFFMLVIFLGSFYLVNLILAVVAMAYEEQNQATIAETEEKEKRFQEAMEMLKKEHEALTIRGVDTVSRSSLEMSPLAPVTNHERRSKRRKRLSSGTEDGGDDRLPKSDSEDGPRALNQLSLTHGLSRTSMRPRSSRGSIFTFRRRDQGSEADFADDENSTAGESESHRTSLLVPWPLRRPSTQGQPGFGTSAPGHVLNGKRNSTVDCNGVVSLLGAGDAEATSPGSHLLRPIVLDRPPDTTTPSEEPGGPQMLTPQAPCADGFEEPGARQRALSAVSVLTSALEELEESHRKCPPCWNRFAQHYLIWECCPLWMSIKQKVKFVVMDPFADLTITMCIVLNTLFMALEHYNMTAEFEEMLQVGNLVFTGIFTAEMTFKIIALDPYYYFQQGWNIFDSIIVILSLMELGLSRMGNLSVLRSFRLLRVFKLAKSWPTLNTLIKIIGNSVGALGNLTLVLAIIVFIFAVVGMQLFGKNYSELRHRISDSGLLPRWHMMDFFHAFLIIFRILCGEWIETMWDCMEVSGQSLCLLVFLLVMVIGNLVVLNLFLALLLSSFSADNLTAPDEDGEMNNLQLALARIQRGLRFVKRTTWDFCCGLLRRRPKKPAALATHSQLPSCIAAPRSPPPPEVEKAPPARKETRFEEDKRPGQGTPGDTEPVCVPIAVAESDTDDQEEDEENSLGTEEEESSKQESQVVSGGHEPPQEPRAWSQVSETTSSEAEASTSQADWQQEREAEPRAPGCGETPEDSYSEGSTADMTNTADLLEQIPDLGEDVKDPEDCFTEGCVRRCPCCMVDTTQAPGKVWWRLRKTCYRIVEHSWFETFIIFMILLSSGALAFEDIYLEERKTIKVLLEYADKMFTYVFVLEMLLKWVAYGFKKYFTNAWCWLDFLIVDVSLVSLVANTLGFAEMGPIKSLRTLRALRPLRALSRFEGMRVVVNALVGAIPSIMNVLLVCLIFWLIFSIMGVNLFAGKFGRCINQTEGDLPLNYTIVNNKSECESFNVTGELYWTKVKVNFDNVGAGYLALLQVATFKGWMDIMYAAVDSRGYEEQPQWEDNLYMYIYFVVFIIFGSFFTLNLFIGVIIDNFNQQKKKLGGQDIFMTEEQKKYYNAMKKLGSKKPQKPIPRPLNKYQGFIFDIVTKQAFDVTIMFLICLNMVTMMVETDDQSPEKVNILAKINLLFVAIFTGECIVKMAALRHYYFTNSWNIFDFVVVILSIVGTVLSDIIQKYFFSPTLFRVIRLARIGRILRLIRGAKGIRTLLFALMMSLPALFNIGLLLFLVMFIYSIFGMANFAYVKWEAGIDDMFNFQTFANSMLCLFQITTSAGWDGLLSPILNTGPPYCDPNLPNSNGSRGNCGSPAVGILFFTTYIIISFLIVVNMYIAIILENFSVATEESTEPLSEDDFDMFYEIWEKFDPEATQFIEYLALSDFADALSEPLRIAKPNQISLINMDLPMVSGDRIHCMDILFAFTKRVLGESGEMDALKIQMEEKFMAANPSKISYEPITTTLRRKHEEVSATVIQRAFRRHLLQRSVKHASFLFRQQAGSSGLSDEDAPEREGLIAYMMNENFSRRSGPLSSSSISSTSFPPSYDSVTRATSDNLPVRASDYSRSEDLADFPPSPDRDRESIV</sequence>
<reference key="1">
    <citation type="journal article" date="2002" name="Am. J. Physiol.">
        <title>Mouse heart Na+ channels: primary structure and function of two isoforms and alternatively spliced variants.</title>
        <authorList>
            <person name="Zimmer T."/>
            <person name="Bollensdorff C."/>
            <person name="Haufe V."/>
            <person name="Birch-Hirschfeld E."/>
            <person name="Benndorf K."/>
        </authorList>
    </citation>
    <scope>NUCLEOTIDE SEQUENCE [MRNA] (ISOFORM 1)</scope>
    <scope>FUNCTION</scope>
    <scope>TRANSPORTER ACTIVITY</scope>
    <scope>SUBCELLULAR LOCATION</scope>
    <scope>ALTERNATIVE SPLICING</scope>
    <scope>TISSUE SPECIFICITY</scope>
    <source>
        <strain>BALB/cJ</strain>
        <tissue>Heart</tissue>
    </source>
</reference>
<reference key="2">
    <citation type="journal article" date="2005" name="Science">
        <title>The transcriptional landscape of the mammalian genome.</title>
        <authorList>
            <person name="Carninci P."/>
            <person name="Kasukawa T."/>
            <person name="Katayama S."/>
            <person name="Gough J."/>
            <person name="Frith M.C."/>
            <person name="Maeda N."/>
            <person name="Oyama R."/>
            <person name="Ravasi T."/>
            <person name="Lenhard B."/>
            <person name="Wells C."/>
            <person name="Kodzius R."/>
            <person name="Shimokawa K."/>
            <person name="Bajic V.B."/>
            <person name="Brenner S.E."/>
            <person name="Batalov S."/>
            <person name="Forrest A.R."/>
            <person name="Zavolan M."/>
            <person name="Davis M.J."/>
            <person name="Wilming L.G."/>
            <person name="Aidinis V."/>
            <person name="Allen J.E."/>
            <person name="Ambesi-Impiombato A."/>
            <person name="Apweiler R."/>
            <person name="Aturaliya R.N."/>
            <person name="Bailey T.L."/>
            <person name="Bansal M."/>
            <person name="Baxter L."/>
            <person name="Beisel K.W."/>
            <person name="Bersano T."/>
            <person name="Bono H."/>
            <person name="Chalk A.M."/>
            <person name="Chiu K.P."/>
            <person name="Choudhary V."/>
            <person name="Christoffels A."/>
            <person name="Clutterbuck D.R."/>
            <person name="Crowe M.L."/>
            <person name="Dalla E."/>
            <person name="Dalrymple B.P."/>
            <person name="de Bono B."/>
            <person name="Della Gatta G."/>
            <person name="di Bernardo D."/>
            <person name="Down T."/>
            <person name="Engstrom P."/>
            <person name="Fagiolini M."/>
            <person name="Faulkner G."/>
            <person name="Fletcher C.F."/>
            <person name="Fukushima T."/>
            <person name="Furuno M."/>
            <person name="Futaki S."/>
            <person name="Gariboldi M."/>
            <person name="Georgii-Hemming P."/>
            <person name="Gingeras T.R."/>
            <person name="Gojobori T."/>
            <person name="Green R.E."/>
            <person name="Gustincich S."/>
            <person name="Harbers M."/>
            <person name="Hayashi Y."/>
            <person name="Hensch T.K."/>
            <person name="Hirokawa N."/>
            <person name="Hill D."/>
            <person name="Huminiecki L."/>
            <person name="Iacono M."/>
            <person name="Ikeo K."/>
            <person name="Iwama A."/>
            <person name="Ishikawa T."/>
            <person name="Jakt M."/>
            <person name="Kanapin A."/>
            <person name="Katoh M."/>
            <person name="Kawasawa Y."/>
            <person name="Kelso J."/>
            <person name="Kitamura H."/>
            <person name="Kitano H."/>
            <person name="Kollias G."/>
            <person name="Krishnan S.P."/>
            <person name="Kruger A."/>
            <person name="Kummerfeld S.K."/>
            <person name="Kurochkin I.V."/>
            <person name="Lareau L.F."/>
            <person name="Lazarevic D."/>
            <person name="Lipovich L."/>
            <person name="Liu J."/>
            <person name="Liuni S."/>
            <person name="McWilliam S."/>
            <person name="Madan Babu M."/>
            <person name="Madera M."/>
            <person name="Marchionni L."/>
            <person name="Matsuda H."/>
            <person name="Matsuzawa S."/>
            <person name="Miki H."/>
            <person name="Mignone F."/>
            <person name="Miyake S."/>
            <person name="Morris K."/>
            <person name="Mottagui-Tabar S."/>
            <person name="Mulder N."/>
            <person name="Nakano N."/>
            <person name="Nakauchi H."/>
            <person name="Ng P."/>
            <person name="Nilsson R."/>
            <person name="Nishiguchi S."/>
            <person name="Nishikawa S."/>
            <person name="Nori F."/>
            <person name="Ohara O."/>
            <person name="Okazaki Y."/>
            <person name="Orlando V."/>
            <person name="Pang K.C."/>
            <person name="Pavan W.J."/>
            <person name="Pavesi G."/>
            <person name="Pesole G."/>
            <person name="Petrovsky N."/>
            <person name="Piazza S."/>
            <person name="Reed J."/>
            <person name="Reid J.F."/>
            <person name="Ring B.Z."/>
            <person name="Ringwald M."/>
            <person name="Rost B."/>
            <person name="Ruan Y."/>
            <person name="Salzberg S.L."/>
            <person name="Sandelin A."/>
            <person name="Schneider C."/>
            <person name="Schoenbach C."/>
            <person name="Sekiguchi K."/>
            <person name="Semple C.A."/>
            <person name="Seno S."/>
            <person name="Sessa L."/>
            <person name="Sheng Y."/>
            <person name="Shibata Y."/>
            <person name="Shimada H."/>
            <person name="Shimada K."/>
            <person name="Silva D."/>
            <person name="Sinclair B."/>
            <person name="Sperling S."/>
            <person name="Stupka E."/>
            <person name="Sugiura K."/>
            <person name="Sultana R."/>
            <person name="Takenaka Y."/>
            <person name="Taki K."/>
            <person name="Tammoja K."/>
            <person name="Tan S.L."/>
            <person name="Tang S."/>
            <person name="Taylor M.S."/>
            <person name="Tegner J."/>
            <person name="Teichmann S.A."/>
            <person name="Ueda H.R."/>
            <person name="van Nimwegen E."/>
            <person name="Verardo R."/>
            <person name="Wei C.L."/>
            <person name="Yagi K."/>
            <person name="Yamanishi H."/>
            <person name="Zabarovsky E."/>
            <person name="Zhu S."/>
            <person name="Zimmer A."/>
            <person name="Hide W."/>
            <person name="Bult C."/>
            <person name="Grimmond S.M."/>
            <person name="Teasdale R.D."/>
            <person name="Liu E.T."/>
            <person name="Brusic V."/>
            <person name="Quackenbush J."/>
            <person name="Wahlestedt C."/>
            <person name="Mattick J.S."/>
            <person name="Hume D.A."/>
            <person name="Kai C."/>
            <person name="Sasaki D."/>
            <person name="Tomaru Y."/>
            <person name="Fukuda S."/>
            <person name="Kanamori-Katayama M."/>
            <person name="Suzuki M."/>
            <person name="Aoki J."/>
            <person name="Arakawa T."/>
            <person name="Iida J."/>
            <person name="Imamura K."/>
            <person name="Itoh M."/>
            <person name="Kato T."/>
            <person name="Kawaji H."/>
            <person name="Kawagashira N."/>
            <person name="Kawashima T."/>
            <person name="Kojima M."/>
            <person name="Kondo S."/>
            <person name="Konno H."/>
            <person name="Nakano K."/>
            <person name="Ninomiya N."/>
            <person name="Nishio T."/>
            <person name="Okada M."/>
            <person name="Plessy C."/>
            <person name="Shibata K."/>
            <person name="Shiraki T."/>
            <person name="Suzuki S."/>
            <person name="Tagami M."/>
            <person name="Waki K."/>
            <person name="Watahiki A."/>
            <person name="Okamura-Oho Y."/>
            <person name="Suzuki H."/>
            <person name="Kawai J."/>
            <person name="Hayashizaki Y."/>
        </authorList>
    </citation>
    <scope>NUCLEOTIDE SEQUENCE [LARGE SCALE MRNA] (ISOFORM 2)</scope>
    <source>
        <strain>C57BL/6J</strain>
    </source>
</reference>
<reference key="3">
    <citation type="journal article" date="2009" name="PLoS Biol.">
        <title>Lineage-specific biology revealed by a finished genome assembly of the mouse.</title>
        <authorList>
            <person name="Church D.M."/>
            <person name="Goodstadt L."/>
            <person name="Hillier L.W."/>
            <person name="Zody M.C."/>
            <person name="Goldstein S."/>
            <person name="She X."/>
            <person name="Bult C.J."/>
            <person name="Agarwala R."/>
            <person name="Cherry J.L."/>
            <person name="DiCuccio M."/>
            <person name="Hlavina W."/>
            <person name="Kapustin Y."/>
            <person name="Meric P."/>
            <person name="Maglott D."/>
            <person name="Birtle Z."/>
            <person name="Marques A.C."/>
            <person name="Graves T."/>
            <person name="Zhou S."/>
            <person name="Teague B."/>
            <person name="Potamousis K."/>
            <person name="Churas C."/>
            <person name="Place M."/>
            <person name="Herschleb J."/>
            <person name="Runnheim R."/>
            <person name="Forrest D."/>
            <person name="Amos-Landgraf J."/>
            <person name="Schwartz D.C."/>
            <person name="Cheng Z."/>
            <person name="Lindblad-Toh K."/>
            <person name="Eichler E.E."/>
            <person name="Ponting C.P."/>
        </authorList>
    </citation>
    <scope>NUCLEOTIDE SEQUENCE [LARGE SCALE GENOMIC DNA]</scope>
    <source>
        <strain>C57BL/6J</strain>
    </source>
</reference>
<reference key="4">
    <citation type="journal article" date="1998" name="J. Neurosci.">
        <title>Interaction of muscle and brain sodium channels with multiple members of the syntrophin family of dystrophin-associated proteins.</title>
        <authorList>
            <person name="Gee S.H."/>
            <person name="Madhavan R."/>
            <person name="Levinson S.R."/>
            <person name="Caldwell J.H."/>
            <person name="Sealock R."/>
            <person name="Froehner S.C."/>
        </authorList>
    </citation>
    <scope>INTERACTION WITH SNTA1; SNTB1 AND SNTB2</scope>
</reference>
<reference key="5">
    <citation type="journal article" date="2006" name="J. Clin. Invest.">
        <title>Ca2+/calmodulin-dependent protein kinase II regulates cardiac Na+ channels.</title>
        <authorList>
            <person name="Wagner S."/>
            <person name="Dybkova N."/>
            <person name="Rasenack E.C."/>
            <person name="Jacobshagen C."/>
            <person name="Fabritz L."/>
            <person name="Kirchhof P."/>
            <person name="Maier S.K."/>
            <person name="Zhang T."/>
            <person name="Hasenfuss G."/>
            <person name="Brown J.H."/>
            <person name="Bers D.M."/>
            <person name="Maier L.S."/>
        </authorList>
    </citation>
    <scope>PHOSPHORYLATION BY CAMK2D</scope>
</reference>
<reference key="6">
    <citation type="journal article" date="2010" name="Cell">
        <title>A tissue-specific atlas of mouse protein phosphorylation and expression.</title>
        <authorList>
            <person name="Huttlin E.L."/>
            <person name="Jedrychowski M.P."/>
            <person name="Elias J.E."/>
            <person name="Goswami T."/>
            <person name="Rad R."/>
            <person name="Beausoleil S.A."/>
            <person name="Villen J."/>
            <person name="Haas W."/>
            <person name="Sowa M.E."/>
            <person name="Gygi S.P."/>
        </authorList>
    </citation>
    <scope>PHOSPHORYLATION [LARGE SCALE ANALYSIS] AT SER-457; SER-484 AND SER-539</scope>
    <scope>IDENTIFICATION BY MASS SPECTROMETRY [LARGE SCALE ANALYSIS]</scope>
    <source>
        <tissue>Heart</tissue>
        <tissue>Liver</tissue>
    </source>
</reference>
<reference key="7">
    <citation type="journal article" date="2011" name="Circ. Res.">
        <title>Fibroblast growth factor homologous factor 13 regulates Na+ channels and conduction velocity in murine hearts.</title>
        <authorList>
            <person name="Wang C."/>
            <person name="Hennessey J.A."/>
            <person name="Kirkton R.D."/>
            <person name="Wang C."/>
            <person name="Graham V."/>
            <person name="Puranam R.S."/>
            <person name="Rosenberg P.B."/>
            <person name="Bursac N."/>
            <person name="Pitt G.S."/>
        </authorList>
    </citation>
    <scope>INTERACTION WITH FGF13</scope>
</reference>
<reference key="8">
    <citation type="journal article" date="2013" name="Circ. Arrhythm. Electrophysiol.">
        <title>MOG1 rescues defective trafficking of Na(v)1.5 mutations in Brugada syndrome and sick sinus syndrome.</title>
        <authorList>
            <person name="Chakrabarti S."/>
            <person name="Wu X."/>
            <person name="Yang Z."/>
            <person name="Wu L."/>
            <person name="Yong S.L."/>
            <person name="Zhang C."/>
            <person name="Hu K."/>
            <person name="Wang Q.K."/>
            <person name="Chen Q."/>
        </authorList>
    </citation>
    <scope>FUNCTION</scope>
    <scope>SUBCELLULAR LOCATION</scope>
</reference>
<reference key="9">
    <citation type="journal article" date="2014" name="Mol. Cell. Proteomics">
        <title>Immunoaffinity enrichment and mass spectrometry analysis of protein methylation.</title>
        <authorList>
            <person name="Guo A."/>
            <person name="Gu H."/>
            <person name="Zhou J."/>
            <person name="Mulhern D."/>
            <person name="Wang Y."/>
            <person name="Lee K.A."/>
            <person name="Yang V."/>
            <person name="Aguiar M."/>
            <person name="Kornhauser J."/>
            <person name="Jia X."/>
            <person name="Ren J."/>
            <person name="Beausoleil S.A."/>
            <person name="Silva J.C."/>
            <person name="Vemulapalli V."/>
            <person name="Bedford M.T."/>
            <person name="Comb M.J."/>
        </authorList>
    </citation>
    <scope>METHYLATION [LARGE SCALE ANALYSIS] AT ARG-526</scope>
    <scope>IDENTIFICATION BY MASS SPECTROMETRY [LARGE SCALE ANALYSIS]</scope>
    <source>
        <tissue>Brain</tissue>
    </source>
</reference>
<reference key="10">
    <citation type="journal article" date="2018" name="J. Am. Heart Assoc.">
        <title>Critical Roles of Xirp Proteins in Cardiac Conduction and Their Rare Variants Identified in Sudden Unexplained Nocturnal Death Syndrome and Brugada Syndrome in Chinese Han Population.</title>
        <authorList>
            <person name="Huang L."/>
            <person name="Wu K.H."/>
            <person name="Zhang L."/>
            <person name="Wang Q."/>
            <person name="Tang S."/>
            <person name="Wu Q."/>
            <person name="Jiang P.H."/>
            <person name="Lin J.J."/>
            <person name="Guo J."/>
            <person name="Wang L."/>
            <person name="Loh S.H."/>
            <person name="Cheng J."/>
        </authorList>
    </citation>
    <scope>FUNCTION</scope>
    <scope>INTERACTION WITH XIRP2</scope>
    <scope>TISSUE SPECIFICITY</scope>
</reference>